<reference key="1">
    <citation type="submission" date="2008-02" db="EMBL/GenBank/DDBJ databases">
        <title>Complete sequence of Escherichia coli C str. ATCC 8739.</title>
        <authorList>
            <person name="Copeland A."/>
            <person name="Lucas S."/>
            <person name="Lapidus A."/>
            <person name="Glavina del Rio T."/>
            <person name="Dalin E."/>
            <person name="Tice H."/>
            <person name="Bruce D."/>
            <person name="Goodwin L."/>
            <person name="Pitluck S."/>
            <person name="Kiss H."/>
            <person name="Brettin T."/>
            <person name="Detter J.C."/>
            <person name="Han C."/>
            <person name="Kuske C.R."/>
            <person name="Schmutz J."/>
            <person name="Larimer F."/>
            <person name="Land M."/>
            <person name="Hauser L."/>
            <person name="Kyrpides N."/>
            <person name="Mikhailova N."/>
            <person name="Ingram L."/>
            <person name="Richardson P."/>
        </authorList>
    </citation>
    <scope>NUCLEOTIDE SEQUENCE [LARGE SCALE GENOMIC DNA]</scope>
    <source>
        <strain>ATCC 8739 / DSM 1576 / NBRC 3972 / NCIMB 8545 / WDCM 00012 / Crooks</strain>
    </source>
</reference>
<sequence length="234" mass="26229">MEFSPPLQRATLIQRYKRFLADVITPDGRELTLHCPNTGAMTGCATPGDTVWYSTSDNTKRKYPHTWELTQSQSGAFICVNTLWANRLTKEAILNESISELSGYSSLKSEVKYGAERSRIDFMLQADSRPDCYIEVKSVTLAENEQGYFPDAVTERGQKHLRELMSVAAEGQRAVIFFAVLHSAITRFSPARHIDEKYAQLLSEAQQRGVEILAYKAEISAEGMALKKSLPVTL</sequence>
<evidence type="ECO:0000255" key="1">
    <source>
        <dbReference type="HAMAP-Rule" id="MF_00095"/>
    </source>
</evidence>
<comment type="function">
    <text evidence="1">Binds to DNA non-specifically. Could be a regulatory factor involved in maltose metabolism.</text>
</comment>
<comment type="similarity">
    <text evidence="1">Belongs to the SfsA family.</text>
</comment>
<keyword id="KW-0238">DNA-binding</keyword>
<name>SFSA_ECOLC</name>
<accession>B1IQJ4</accession>
<gene>
    <name evidence="1" type="primary">sfsA</name>
    <name type="ordered locus">EcolC_3513</name>
</gene>
<proteinExistence type="inferred from homology"/>
<organism>
    <name type="scientific">Escherichia coli (strain ATCC 8739 / DSM 1576 / NBRC 3972 / NCIMB 8545 / WDCM 00012 / Crooks)</name>
    <dbReference type="NCBI Taxonomy" id="481805"/>
    <lineage>
        <taxon>Bacteria</taxon>
        <taxon>Pseudomonadati</taxon>
        <taxon>Pseudomonadota</taxon>
        <taxon>Gammaproteobacteria</taxon>
        <taxon>Enterobacterales</taxon>
        <taxon>Enterobacteriaceae</taxon>
        <taxon>Escherichia</taxon>
    </lineage>
</organism>
<dbReference type="EMBL" id="CP000946">
    <property type="protein sequence ID" value="ACA79127.1"/>
    <property type="molecule type" value="Genomic_DNA"/>
</dbReference>
<dbReference type="RefSeq" id="WP_000396036.1">
    <property type="nucleotide sequence ID" value="NZ_MTFT01000035.1"/>
</dbReference>
<dbReference type="SMR" id="B1IQJ4"/>
<dbReference type="GeneID" id="75202039"/>
<dbReference type="KEGG" id="ecl:EcolC_3513"/>
<dbReference type="HOGENOM" id="CLU_052299_2_0_6"/>
<dbReference type="GO" id="GO:0003677">
    <property type="term" value="F:DNA binding"/>
    <property type="evidence" value="ECO:0007669"/>
    <property type="project" value="UniProtKB-KW"/>
</dbReference>
<dbReference type="CDD" id="cd22359">
    <property type="entry name" value="SfsA-like_bacterial"/>
    <property type="match status" value="1"/>
</dbReference>
<dbReference type="FunFam" id="2.40.50.580:FF:000001">
    <property type="entry name" value="Sugar fermentation stimulation protein A"/>
    <property type="match status" value="1"/>
</dbReference>
<dbReference type="FunFam" id="3.40.1350.60:FF:000001">
    <property type="entry name" value="Sugar fermentation stimulation protein A"/>
    <property type="match status" value="1"/>
</dbReference>
<dbReference type="Gene3D" id="2.40.50.580">
    <property type="match status" value="1"/>
</dbReference>
<dbReference type="Gene3D" id="3.40.1350.60">
    <property type="match status" value="1"/>
</dbReference>
<dbReference type="HAMAP" id="MF_00095">
    <property type="entry name" value="SfsA"/>
    <property type="match status" value="1"/>
</dbReference>
<dbReference type="InterPro" id="IPR005224">
    <property type="entry name" value="SfsA"/>
</dbReference>
<dbReference type="InterPro" id="IPR040452">
    <property type="entry name" value="SfsA_C"/>
</dbReference>
<dbReference type="InterPro" id="IPR041465">
    <property type="entry name" value="SfsA_N"/>
</dbReference>
<dbReference type="NCBIfam" id="TIGR00230">
    <property type="entry name" value="sfsA"/>
    <property type="match status" value="1"/>
</dbReference>
<dbReference type="PANTHER" id="PTHR30545">
    <property type="entry name" value="SUGAR FERMENTATION STIMULATION PROTEIN A"/>
    <property type="match status" value="1"/>
</dbReference>
<dbReference type="PANTHER" id="PTHR30545:SF2">
    <property type="entry name" value="SUGAR FERMENTATION STIMULATION PROTEIN A"/>
    <property type="match status" value="1"/>
</dbReference>
<dbReference type="Pfam" id="PF03749">
    <property type="entry name" value="SfsA"/>
    <property type="match status" value="1"/>
</dbReference>
<dbReference type="Pfam" id="PF17746">
    <property type="entry name" value="SfsA_N"/>
    <property type="match status" value="1"/>
</dbReference>
<feature type="chain" id="PRO_1000075540" description="Sugar fermentation stimulation protein A">
    <location>
        <begin position="1"/>
        <end position="234"/>
    </location>
</feature>
<feature type="DNA-binding region" description="H-T-H motif" evidence="1">
    <location>
        <begin position="201"/>
        <end position="220"/>
    </location>
</feature>
<protein>
    <recommendedName>
        <fullName evidence="1">Sugar fermentation stimulation protein A</fullName>
    </recommendedName>
</protein>